<organism>
    <name type="scientific">Mus musculus</name>
    <name type="common">Mouse</name>
    <dbReference type="NCBI Taxonomy" id="10090"/>
    <lineage>
        <taxon>Eukaryota</taxon>
        <taxon>Metazoa</taxon>
        <taxon>Chordata</taxon>
        <taxon>Craniata</taxon>
        <taxon>Vertebrata</taxon>
        <taxon>Euteleostomi</taxon>
        <taxon>Mammalia</taxon>
        <taxon>Eutheria</taxon>
        <taxon>Euarchontoglires</taxon>
        <taxon>Glires</taxon>
        <taxon>Rodentia</taxon>
        <taxon>Myomorpha</taxon>
        <taxon>Muroidea</taxon>
        <taxon>Muridae</taxon>
        <taxon>Murinae</taxon>
        <taxon>Mus</taxon>
        <taxon>Mus</taxon>
    </lineage>
</organism>
<sequence length="453" mass="50459">MARKAVSRKRKASASPGAGSDAQGPQFGWDHSLHKRKRLPPVKRSLVYYLKNREVRLQNETSYSRLLHGYAAQQLPSLLKEREFHLGTLNKVFASQWLNHRQVVCGTKCNTLFVVDVQTGQITKIPILKDREPGGVTQQGCGIHAIELNPSRTLLATGGDNPNSLAIYRLPTLDPVCVGDDGHKDWIFSIAWINDTMAVSGSRDGSMGLWEVTDDVLTKSDARHNVSPVPVYAHITHKALKDIPKEDTNPDNCKVRALAFNNKNKELGAVSLDGYFHLWKAENTLSKLLSTKLPYCRENVCLAYGSEWSVYAVGSQAHVSFLDPRQPSYNVKSVCSRERGSGIRSVSFYEHIITVGTGQGSLLFYDIRAQRFLEERLSACYGSKPRLAGENLKLTTGRGWLNHDETWRNYFSDIDFFPNAVYTHCYDSSGTKLFVAGGPLPSGLHGNYAGLWS</sequence>
<evidence type="ECO:0000250" key="1">
    <source>
        <dbReference type="UniProtKB" id="Q5T6F0"/>
    </source>
</evidence>
<evidence type="ECO:0000256" key="2">
    <source>
        <dbReference type="SAM" id="MobiDB-lite"/>
    </source>
</evidence>
<evidence type="ECO:0000269" key="3">
    <source>
    </source>
</evidence>
<evidence type="ECO:0000303" key="4">
    <source>
    </source>
</evidence>
<evidence type="ECO:0000305" key="5"/>
<evidence type="ECO:0000312" key="6">
    <source>
        <dbReference type="MGI" id="MGI:1916220"/>
    </source>
</evidence>
<comment type="function">
    <text evidence="1 3">Substrate-recognition component of a DCX (DDB1-CUL4-X-box) E3 ubiquitin-protein ligase complex of the DesCEND (destruction via C-end degrons) pathway, which recognizes a C-degron located at the extreme C terminus of target proteins, leading to their ubiquitination and degradation. The C-degron recognized by the DesCEND pathway is usually a motif of less than ten residues and can be present in full-length proteins, truncated proteins or proteolytically cleaved forms (PubMed:34065512). The DCX(DCAF12) complex specifically recognizes proteins with a diglutamate (Glu-Glu) at the C-terminus, such as MAGEA3, MAGEA6 and CCT5, leading to their ubiquitination and degradation. Ubiquitination of MAGEA3, MAGEA6 by DCX(DCAF12) complex is required for starvation-induced autophagy (By similarity). Also directly recognizes the C-terminal glutamate-leucine (Glu-Leu) degron as an alternative degron in proteins such as MOV10, leading to their ubiquitination and degradation. Controls the protein level of MOV10 during spermatogenesis and in T cells, especially after their activation (PubMed:34065512).</text>
</comment>
<comment type="pathway">
    <text evidence="1">Protein modification; protein ubiquitination.</text>
</comment>
<comment type="subunit">
    <text evidence="1">Component of the DCX(DCAF12) E3 ubiquitin ligase complex, at least composed of CUL4 (CUL4A or CUL4B), DDB1, DCAF12 and RBX1.</text>
</comment>
<comment type="subcellular location">
    <subcellularLocation>
        <location evidence="1">Cytoplasm</location>
    </subcellularLocation>
    <subcellularLocation>
        <location evidence="1">Cytoplasm</location>
        <location evidence="1">Cytoskeleton</location>
        <location evidence="1">Microtubule organizing center</location>
        <location evidence="1">Centrosome</location>
    </subcellularLocation>
    <subcellularLocation>
        <location evidence="1">Nucleus</location>
    </subcellularLocation>
</comment>
<comment type="disruption phenotype">
    <text evidence="3">Knockout mice are born at expected Mendelian ratios and manifest no apparent physical abnormalities. Mutants have testes that produce fewer mature sperms, an altered percentage of CD4(+) T-cells and natural killer (NK) cells as well as increased splenocyte apoptosis after T cell activation.</text>
</comment>
<comment type="similarity">
    <text evidence="5">Belongs to the WD repeat DCAF12 family.</text>
</comment>
<comment type="sequence caution" evidence="5">
    <conflict type="frameshift">
        <sequence resource="EMBL-CDS" id="BAC39908"/>
    </conflict>
</comment>
<comment type="sequence caution" evidence="5">
    <conflict type="erroneous initiation">
        <sequence resource="EMBL-CDS" id="BAD32567"/>
    </conflict>
    <text>Extended N-terminus.</text>
</comment>
<keyword id="KW-0963">Cytoplasm</keyword>
<keyword id="KW-0206">Cytoskeleton</keyword>
<keyword id="KW-0539">Nucleus</keyword>
<keyword id="KW-0597">Phosphoprotein</keyword>
<keyword id="KW-1185">Reference proteome</keyword>
<keyword id="KW-0677">Repeat</keyword>
<keyword id="KW-0833">Ubl conjugation pathway</keyword>
<keyword id="KW-0853">WD repeat</keyword>
<reference key="1">
    <citation type="journal article" date="2004" name="DNA Res.">
        <title>Prediction of the coding sequences of mouse homologues of KIAA gene: IV. The complete nucleotide sequences of 500 mouse KIAA-homologous cDNAs identified by screening of terminal sequences of cDNA clones randomly sampled from size-fractionated libraries.</title>
        <authorList>
            <person name="Okazaki N."/>
            <person name="Kikuno R."/>
            <person name="Ohara R."/>
            <person name="Inamoto S."/>
            <person name="Koseki H."/>
            <person name="Hiraoka S."/>
            <person name="Saga Y."/>
            <person name="Seino S."/>
            <person name="Nishimura M."/>
            <person name="Kaisho T."/>
            <person name="Hoshino K."/>
            <person name="Kitamura H."/>
            <person name="Nagase T."/>
            <person name="Ohara O."/>
            <person name="Koga H."/>
        </authorList>
    </citation>
    <scope>NUCLEOTIDE SEQUENCE [LARGE SCALE MRNA]</scope>
    <source>
        <tissue>Fetal brain</tissue>
    </source>
</reference>
<reference key="2">
    <citation type="journal article" date="2005" name="Science">
        <title>The transcriptional landscape of the mammalian genome.</title>
        <authorList>
            <person name="Carninci P."/>
            <person name="Kasukawa T."/>
            <person name="Katayama S."/>
            <person name="Gough J."/>
            <person name="Frith M.C."/>
            <person name="Maeda N."/>
            <person name="Oyama R."/>
            <person name="Ravasi T."/>
            <person name="Lenhard B."/>
            <person name="Wells C."/>
            <person name="Kodzius R."/>
            <person name="Shimokawa K."/>
            <person name="Bajic V.B."/>
            <person name="Brenner S.E."/>
            <person name="Batalov S."/>
            <person name="Forrest A.R."/>
            <person name="Zavolan M."/>
            <person name="Davis M.J."/>
            <person name="Wilming L.G."/>
            <person name="Aidinis V."/>
            <person name="Allen J.E."/>
            <person name="Ambesi-Impiombato A."/>
            <person name="Apweiler R."/>
            <person name="Aturaliya R.N."/>
            <person name="Bailey T.L."/>
            <person name="Bansal M."/>
            <person name="Baxter L."/>
            <person name="Beisel K.W."/>
            <person name="Bersano T."/>
            <person name="Bono H."/>
            <person name="Chalk A.M."/>
            <person name="Chiu K.P."/>
            <person name="Choudhary V."/>
            <person name="Christoffels A."/>
            <person name="Clutterbuck D.R."/>
            <person name="Crowe M.L."/>
            <person name="Dalla E."/>
            <person name="Dalrymple B.P."/>
            <person name="de Bono B."/>
            <person name="Della Gatta G."/>
            <person name="di Bernardo D."/>
            <person name="Down T."/>
            <person name="Engstrom P."/>
            <person name="Fagiolini M."/>
            <person name="Faulkner G."/>
            <person name="Fletcher C.F."/>
            <person name="Fukushima T."/>
            <person name="Furuno M."/>
            <person name="Futaki S."/>
            <person name="Gariboldi M."/>
            <person name="Georgii-Hemming P."/>
            <person name="Gingeras T.R."/>
            <person name="Gojobori T."/>
            <person name="Green R.E."/>
            <person name="Gustincich S."/>
            <person name="Harbers M."/>
            <person name="Hayashi Y."/>
            <person name="Hensch T.K."/>
            <person name="Hirokawa N."/>
            <person name="Hill D."/>
            <person name="Huminiecki L."/>
            <person name="Iacono M."/>
            <person name="Ikeo K."/>
            <person name="Iwama A."/>
            <person name="Ishikawa T."/>
            <person name="Jakt M."/>
            <person name="Kanapin A."/>
            <person name="Katoh M."/>
            <person name="Kawasawa Y."/>
            <person name="Kelso J."/>
            <person name="Kitamura H."/>
            <person name="Kitano H."/>
            <person name="Kollias G."/>
            <person name="Krishnan S.P."/>
            <person name="Kruger A."/>
            <person name="Kummerfeld S.K."/>
            <person name="Kurochkin I.V."/>
            <person name="Lareau L.F."/>
            <person name="Lazarevic D."/>
            <person name="Lipovich L."/>
            <person name="Liu J."/>
            <person name="Liuni S."/>
            <person name="McWilliam S."/>
            <person name="Madan Babu M."/>
            <person name="Madera M."/>
            <person name="Marchionni L."/>
            <person name="Matsuda H."/>
            <person name="Matsuzawa S."/>
            <person name="Miki H."/>
            <person name="Mignone F."/>
            <person name="Miyake S."/>
            <person name="Morris K."/>
            <person name="Mottagui-Tabar S."/>
            <person name="Mulder N."/>
            <person name="Nakano N."/>
            <person name="Nakauchi H."/>
            <person name="Ng P."/>
            <person name="Nilsson R."/>
            <person name="Nishiguchi S."/>
            <person name="Nishikawa S."/>
            <person name="Nori F."/>
            <person name="Ohara O."/>
            <person name="Okazaki Y."/>
            <person name="Orlando V."/>
            <person name="Pang K.C."/>
            <person name="Pavan W.J."/>
            <person name="Pavesi G."/>
            <person name="Pesole G."/>
            <person name="Petrovsky N."/>
            <person name="Piazza S."/>
            <person name="Reed J."/>
            <person name="Reid J.F."/>
            <person name="Ring B.Z."/>
            <person name="Ringwald M."/>
            <person name="Rost B."/>
            <person name="Ruan Y."/>
            <person name="Salzberg S.L."/>
            <person name="Sandelin A."/>
            <person name="Schneider C."/>
            <person name="Schoenbach C."/>
            <person name="Sekiguchi K."/>
            <person name="Semple C.A."/>
            <person name="Seno S."/>
            <person name="Sessa L."/>
            <person name="Sheng Y."/>
            <person name="Shibata Y."/>
            <person name="Shimada H."/>
            <person name="Shimada K."/>
            <person name="Silva D."/>
            <person name="Sinclair B."/>
            <person name="Sperling S."/>
            <person name="Stupka E."/>
            <person name="Sugiura K."/>
            <person name="Sultana R."/>
            <person name="Takenaka Y."/>
            <person name="Taki K."/>
            <person name="Tammoja K."/>
            <person name="Tan S.L."/>
            <person name="Tang S."/>
            <person name="Taylor M.S."/>
            <person name="Tegner J."/>
            <person name="Teichmann S.A."/>
            <person name="Ueda H.R."/>
            <person name="van Nimwegen E."/>
            <person name="Verardo R."/>
            <person name="Wei C.L."/>
            <person name="Yagi K."/>
            <person name="Yamanishi H."/>
            <person name="Zabarovsky E."/>
            <person name="Zhu S."/>
            <person name="Zimmer A."/>
            <person name="Hide W."/>
            <person name="Bult C."/>
            <person name="Grimmond S.M."/>
            <person name="Teasdale R.D."/>
            <person name="Liu E.T."/>
            <person name="Brusic V."/>
            <person name="Quackenbush J."/>
            <person name="Wahlestedt C."/>
            <person name="Mattick J.S."/>
            <person name="Hume D.A."/>
            <person name="Kai C."/>
            <person name="Sasaki D."/>
            <person name="Tomaru Y."/>
            <person name="Fukuda S."/>
            <person name="Kanamori-Katayama M."/>
            <person name="Suzuki M."/>
            <person name="Aoki J."/>
            <person name="Arakawa T."/>
            <person name="Iida J."/>
            <person name="Imamura K."/>
            <person name="Itoh M."/>
            <person name="Kato T."/>
            <person name="Kawaji H."/>
            <person name="Kawagashira N."/>
            <person name="Kawashima T."/>
            <person name="Kojima M."/>
            <person name="Kondo S."/>
            <person name="Konno H."/>
            <person name="Nakano K."/>
            <person name="Ninomiya N."/>
            <person name="Nishio T."/>
            <person name="Okada M."/>
            <person name="Plessy C."/>
            <person name="Shibata K."/>
            <person name="Shiraki T."/>
            <person name="Suzuki S."/>
            <person name="Tagami M."/>
            <person name="Waki K."/>
            <person name="Watahiki A."/>
            <person name="Okamura-Oho Y."/>
            <person name="Suzuki H."/>
            <person name="Kawai J."/>
            <person name="Hayashizaki Y."/>
        </authorList>
    </citation>
    <scope>NUCLEOTIDE SEQUENCE [LARGE SCALE MRNA]</scope>
    <source>
        <strain>C57BL/6J</strain>
        <tissue>Cerebellum</tissue>
        <tissue>Eye</tissue>
        <tissue>Forelimb</tissue>
        <tissue>Kidney</tissue>
        <tissue>Testis</tissue>
    </source>
</reference>
<reference key="3">
    <citation type="journal article" date="2009" name="PLoS Biol.">
        <title>Lineage-specific biology revealed by a finished genome assembly of the mouse.</title>
        <authorList>
            <person name="Church D.M."/>
            <person name="Goodstadt L."/>
            <person name="Hillier L.W."/>
            <person name="Zody M.C."/>
            <person name="Goldstein S."/>
            <person name="She X."/>
            <person name="Bult C.J."/>
            <person name="Agarwala R."/>
            <person name="Cherry J.L."/>
            <person name="DiCuccio M."/>
            <person name="Hlavina W."/>
            <person name="Kapustin Y."/>
            <person name="Meric P."/>
            <person name="Maglott D."/>
            <person name="Birtle Z."/>
            <person name="Marques A.C."/>
            <person name="Graves T."/>
            <person name="Zhou S."/>
            <person name="Teague B."/>
            <person name="Potamousis K."/>
            <person name="Churas C."/>
            <person name="Place M."/>
            <person name="Herschleb J."/>
            <person name="Runnheim R."/>
            <person name="Forrest D."/>
            <person name="Amos-Landgraf J."/>
            <person name="Schwartz D.C."/>
            <person name="Cheng Z."/>
            <person name="Lindblad-Toh K."/>
            <person name="Eichler E.E."/>
            <person name="Ponting C.P."/>
        </authorList>
    </citation>
    <scope>NUCLEOTIDE SEQUENCE [LARGE SCALE GENOMIC DNA]</scope>
    <source>
        <strain>C57BL/6J</strain>
    </source>
</reference>
<reference key="4">
    <citation type="journal article" date="2004" name="Genome Res.">
        <title>The status, quality, and expansion of the NIH full-length cDNA project: the Mammalian Gene Collection (MGC).</title>
        <authorList>
            <consortium name="The MGC Project Team"/>
        </authorList>
    </citation>
    <scope>NUCLEOTIDE SEQUENCE [LARGE SCALE MRNA]</scope>
    <source>
        <strain>FVB/N</strain>
        <tissue>Mammary tumor</tissue>
    </source>
</reference>
<reference key="5">
    <citation type="journal article" date="2021" name="Int. J. Mol. Sci.">
        <title>CRL4-DCAF12 Ubiquitin Ligase Controls MOV10 RNA Helicase during Spermatogenesis and T Cell Activation.</title>
        <authorList>
            <person name="Lidak T."/>
            <person name="Baloghova N."/>
            <person name="Korinek V."/>
            <person name="Sedlacek R."/>
            <person name="Balounova J."/>
            <person name="Kasparek P."/>
            <person name="Cermak L."/>
        </authorList>
    </citation>
    <scope>FUNCTION</scope>
    <scope>DISRUPTION PHENOTYPE</scope>
    <scope>SUBCELLULAR LOCATION</scope>
</reference>
<feature type="chain" id="PRO_0000306842" description="DDB1- and CUL4-associated factor 12">
    <location>
        <begin position="1"/>
        <end position="453"/>
    </location>
</feature>
<feature type="repeat" description="WD 1">
    <location>
        <begin position="138"/>
        <end position="178"/>
    </location>
</feature>
<feature type="repeat" description="WD 2">
    <location>
        <begin position="182"/>
        <end position="220"/>
    </location>
</feature>
<feature type="repeat" description="WD 3">
    <location>
        <begin position="250"/>
        <end position="289"/>
    </location>
</feature>
<feature type="repeat" description="WD 4">
    <location>
        <begin position="338"/>
        <end position="375"/>
    </location>
</feature>
<feature type="region of interest" description="Required for nuclear location and interaction with MOV10" evidence="1">
    <location>
        <begin position="1"/>
        <end position="38"/>
    </location>
</feature>
<feature type="region of interest" description="Disordered" evidence="2">
    <location>
        <begin position="1"/>
        <end position="34"/>
    </location>
</feature>
<feature type="compositionally biased region" description="Basic residues" evidence="2">
    <location>
        <begin position="1"/>
        <end position="12"/>
    </location>
</feature>
<feature type="modified residue" description="Phosphoserine" evidence="1">
    <location>
        <position position="15"/>
    </location>
</feature>
<feature type="sequence conflict" description="In Ref. 1; BAD32567." evidence="5" ref="1">
    <original>R</original>
    <variation>S</variation>
    <location>
        <position position="44"/>
    </location>
</feature>
<feature type="sequence conflict" description="In Ref. 2; BAC39908." evidence="5" ref="2">
    <original>P</original>
    <variation>A</variation>
    <location>
        <position position="294"/>
    </location>
</feature>
<feature type="sequence conflict" description="In Ref. 2; BAC41053." evidence="5" ref="2">
    <original>E</original>
    <variation>G</variation>
    <location>
        <position position="375"/>
    </location>
</feature>
<feature type="sequence conflict" description="In Ref. 2; BAB23817." evidence="5" ref="2">
    <original>G</original>
    <variation>P</variation>
    <location>
        <position position="438"/>
    </location>
</feature>
<proteinExistence type="evidence at transcript level"/>
<protein>
    <recommendedName>
        <fullName evidence="5">DDB1- and CUL4-associated factor 12</fullName>
    </recommendedName>
    <alternativeName>
        <fullName>WD repeat-containing protein 40A</fullName>
    </alternativeName>
</protein>
<gene>
    <name evidence="6" type="primary">Dcaf12</name>
    <name evidence="4" type="synonym">Kiaa1892</name>
    <name type="synonym">Wdr40a</name>
</gene>
<accession>Q8BGZ3</accession>
<accession>Q69Z77</accession>
<accession>Q8BN60</accession>
<accession>Q8C1Y4</accession>
<accession>Q9DB95</accession>
<name>DCA12_MOUSE</name>
<dbReference type="EMBL" id="AK173289">
    <property type="protein sequence ID" value="BAD32567.1"/>
    <property type="status" value="ALT_INIT"/>
    <property type="molecule type" value="mRNA"/>
</dbReference>
<dbReference type="EMBL" id="AK005099">
    <property type="protein sequence ID" value="BAB23817.2"/>
    <property type="molecule type" value="mRNA"/>
</dbReference>
<dbReference type="EMBL" id="AK030173">
    <property type="protein sequence ID" value="BAC26822.1"/>
    <property type="molecule type" value="mRNA"/>
</dbReference>
<dbReference type="EMBL" id="AK031089">
    <property type="protein sequence ID" value="BAC27247.1"/>
    <property type="molecule type" value="mRNA"/>
</dbReference>
<dbReference type="EMBL" id="AK087517">
    <property type="protein sequence ID" value="BAC39908.1"/>
    <property type="status" value="ALT_FRAME"/>
    <property type="molecule type" value="mRNA"/>
</dbReference>
<dbReference type="EMBL" id="AK090028">
    <property type="protein sequence ID" value="BAC41053.1"/>
    <property type="molecule type" value="mRNA"/>
</dbReference>
<dbReference type="EMBL" id="AL807823">
    <property type="status" value="NOT_ANNOTATED_CDS"/>
    <property type="molecule type" value="Genomic_DNA"/>
</dbReference>
<dbReference type="EMBL" id="BC023852">
    <property type="protein sequence ID" value="AAH23852.1"/>
    <property type="molecule type" value="mRNA"/>
</dbReference>
<dbReference type="CCDS" id="CCDS18059.1"/>
<dbReference type="RefSeq" id="NP_081169.2">
    <property type="nucleotide sequence ID" value="NM_026893.3"/>
</dbReference>
<dbReference type="SMR" id="Q8BGZ3"/>
<dbReference type="BioGRID" id="213148">
    <property type="interactions" value="2"/>
</dbReference>
<dbReference type="FunCoup" id="Q8BGZ3">
    <property type="interactions" value="896"/>
</dbReference>
<dbReference type="STRING" id="10090.ENSMUSP00000030145"/>
<dbReference type="iPTMnet" id="Q8BGZ3"/>
<dbReference type="PhosphoSitePlus" id="Q8BGZ3"/>
<dbReference type="PaxDb" id="10090-ENSMUSP00000030145"/>
<dbReference type="PeptideAtlas" id="Q8BGZ3"/>
<dbReference type="ProteomicsDB" id="279160"/>
<dbReference type="Pumba" id="Q8BGZ3"/>
<dbReference type="Antibodypedia" id="2916">
    <property type="antibodies" value="136 antibodies from 27 providers"/>
</dbReference>
<dbReference type="DNASU" id="68970"/>
<dbReference type="Ensembl" id="ENSMUST00000030145.9">
    <property type="protein sequence ID" value="ENSMUSP00000030145.9"/>
    <property type="gene ID" value="ENSMUSG00000028436.9"/>
</dbReference>
<dbReference type="GeneID" id="68970"/>
<dbReference type="KEGG" id="mmu:68970"/>
<dbReference type="UCSC" id="uc008sil.2">
    <property type="organism name" value="mouse"/>
</dbReference>
<dbReference type="AGR" id="MGI:1916220"/>
<dbReference type="CTD" id="25853"/>
<dbReference type="MGI" id="MGI:1916220">
    <property type="gene designation" value="Dcaf12"/>
</dbReference>
<dbReference type="VEuPathDB" id="HostDB:ENSMUSG00000028436"/>
<dbReference type="eggNOG" id="ENOG502QR7U">
    <property type="taxonomic scope" value="Eukaryota"/>
</dbReference>
<dbReference type="GeneTree" id="ENSGT00940000158028"/>
<dbReference type="HOGENOM" id="CLU_020124_1_0_1"/>
<dbReference type="InParanoid" id="Q8BGZ3"/>
<dbReference type="OMA" id="GGEQYGW"/>
<dbReference type="OrthoDB" id="9610195at2759"/>
<dbReference type="PhylomeDB" id="Q8BGZ3"/>
<dbReference type="TreeFam" id="TF323731"/>
<dbReference type="UniPathway" id="UPA00143"/>
<dbReference type="BioGRID-ORCS" id="68970">
    <property type="hits" value="2 hits in 77 CRISPR screens"/>
</dbReference>
<dbReference type="ChiTaRS" id="Dcaf12">
    <property type="organism name" value="mouse"/>
</dbReference>
<dbReference type="PRO" id="PR:Q8BGZ3"/>
<dbReference type="Proteomes" id="UP000000589">
    <property type="component" value="Chromosome 4"/>
</dbReference>
<dbReference type="RNAct" id="Q8BGZ3">
    <property type="molecule type" value="protein"/>
</dbReference>
<dbReference type="Bgee" id="ENSMUSG00000028436">
    <property type="expression patterns" value="Expressed in blood and 266 other cell types or tissues"/>
</dbReference>
<dbReference type="GO" id="GO:0005813">
    <property type="term" value="C:centrosome"/>
    <property type="evidence" value="ECO:0007669"/>
    <property type="project" value="UniProtKB-SubCell"/>
</dbReference>
<dbReference type="GO" id="GO:0080008">
    <property type="term" value="C:Cul4-RING E3 ubiquitin ligase complex"/>
    <property type="evidence" value="ECO:0000250"/>
    <property type="project" value="UniProtKB"/>
</dbReference>
<dbReference type="GO" id="GO:0005829">
    <property type="term" value="C:cytosol"/>
    <property type="evidence" value="ECO:0007669"/>
    <property type="project" value="Ensembl"/>
</dbReference>
<dbReference type="GO" id="GO:0005634">
    <property type="term" value="C:nucleus"/>
    <property type="evidence" value="ECO:0007669"/>
    <property type="project" value="UniProtKB-SubCell"/>
</dbReference>
<dbReference type="GO" id="GO:1990756">
    <property type="term" value="F:ubiquitin-like ligase-substrate adaptor activity"/>
    <property type="evidence" value="ECO:0000250"/>
    <property type="project" value="UniProtKB"/>
</dbReference>
<dbReference type="GO" id="GO:0016567">
    <property type="term" value="P:protein ubiquitination"/>
    <property type="evidence" value="ECO:0007669"/>
    <property type="project" value="UniProtKB-UniPathway"/>
</dbReference>
<dbReference type="GO" id="GO:0010506">
    <property type="term" value="P:regulation of autophagy"/>
    <property type="evidence" value="ECO:0000250"/>
    <property type="project" value="UniProtKB"/>
</dbReference>
<dbReference type="GO" id="GO:0042110">
    <property type="term" value="P:T cell activation"/>
    <property type="evidence" value="ECO:0007669"/>
    <property type="project" value="Ensembl"/>
</dbReference>
<dbReference type="GO" id="GO:0140627">
    <property type="term" value="P:ubiquitin-dependent protein catabolic process via the C-end degron rule pathway"/>
    <property type="evidence" value="ECO:0000250"/>
    <property type="project" value="UniProtKB"/>
</dbReference>
<dbReference type="FunFam" id="2.130.10.10:FF:001190">
    <property type="entry name" value="DDB1 and CUL4 associated factor 12"/>
    <property type="match status" value="1"/>
</dbReference>
<dbReference type="FunFam" id="2.130.10.10:FF:000253">
    <property type="entry name" value="DDB1- and CUL4-associated factor 12"/>
    <property type="match status" value="1"/>
</dbReference>
<dbReference type="Gene3D" id="2.130.10.10">
    <property type="entry name" value="YVTN repeat-like/Quinoprotein amine dehydrogenase"/>
    <property type="match status" value="2"/>
</dbReference>
<dbReference type="InterPro" id="IPR056151">
    <property type="entry name" value="Beta-prop_DCAF12"/>
</dbReference>
<dbReference type="InterPro" id="IPR051191">
    <property type="entry name" value="DCAF12"/>
</dbReference>
<dbReference type="InterPro" id="IPR015943">
    <property type="entry name" value="WD40/YVTN_repeat-like_dom_sf"/>
</dbReference>
<dbReference type="InterPro" id="IPR019775">
    <property type="entry name" value="WD40_repeat_CS"/>
</dbReference>
<dbReference type="InterPro" id="IPR036322">
    <property type="entry name" value="WD40_repeat_dom_sf"/>
</dbReference>
<dbReference type="InterPro" id="IPR001680">
    <property type="entry name" value="WD40_rpt"/>
</dbReference>
<dbReference type="PANTHER" id="PTHR19860:SF10">
    <property type="entry name" value="DDB1- AND CUL4-ASSOCIATED FACTOR 12"/>
    <property type="match status" value="1"/>
</dbReference>
<dbReference type="PANTHER" id="PTHR19860">
    <property type="entry name" value="DDB1- AND CUL4-ASSOCIATED FACTOR 12-RELATED"/>
    <property type="match status" value="1"/>
</dbReference>
<dbReference type="Pfam" id="PF23760">
    <property type="entry name" value="Beta-prop_DCAF12"/>
    <property type="match status" value="1"/>
</dbReference>
<dbReference type="SMART" id="SM00320">
    <property type="entry name" value="WD40"/>
    <property type="match status" value="4"/>
</dbReference>
<dbReference type="SUPFAM" id="SSF50978">
    <property type="entry name" value="WD40 repeat-like"/>
    <property type="match status" value="1"/>
</dbReference>
<dbReference type="PROSITE" id="PS00678">
    <property type="entry name" value="WD_REPEATS_1"/>
    <property type="match status" value="1"/>
</dbReference>
<dbReference type="PROSITE" id="PS50082">
    <property type="entry name" value="WD_REPEATS_2"/>
    <property type="match status" value="1"/>
</dbReference>
<dbReference type="PROSITE" id="PS50294">
    <property type="entry name" value="WD_REPEATS_REGION"/>
    <property type="match status" value="1"/>
</dbReference>